<keyword id="KW-0150">Chloroplast</keyword>
<keyword id="KW-0472">Membrane</keyword>
<keyword id="KW-0602">Photosynthesis</keyword>
<keyword id="KW-0604">Photosystem II</keyword>
<keyword id="KW-0934">Plastid</keyword>
<keyword id="KW-0793">Thylakoid</keyword>
<keyword id="KW-0812">Transmembrane</keyword>
<keyword id="KW-1133">Transmembrane helix</keyword>
<dbReference type="EMBL" id="X04465">
    <property type="protein sequence ID" value="CAA28111.1"/>
    <property type="molecule type" value="Genomic_DNA"/>
</dbReference>
<dbReference type="PIR" id="S04814">
    <property type="entry name" value="A05057"/>
</dbReference>
<dbReference type="RefSeq" id="NP_039325.1">
    <property type="nucleotide sequence ID" value="NC_001319.1"/>
</dbReference>
<dbReference type="RefSeq" id="YP_009646839.1">
    <property type="nucleotide sequence ID" value="NC_042505.1"/>
</dbReference>
<dbReference type="SMR" id="P12182"/>
<dbReference type="GeneID" id="2702607"/>
<dbReference type="GeneID" id="40386681"/>
<dbReference type="GO" id="GO:0009535">
    <property type="term" value="C:chloroplast thylakoid membrane"/>
    <property type="evidence" value="ECO:0007669"/>
    <property type="project" value="UniProtKB-SubCell"/>
</dbReference>
<dbReference type="GO" id="GO:0009539">
    <property type="term" value="C:photosystem II reaction center"/>
    <property type="evidence" value="ECO:0007669"/>
    <property type="project" value="InterPro"/>
</dbReference>
<dbReference type="GO" id="GO:0015979">
    <property type="term" value="P:photosynthesis"/>
    <property type="evidence" value="ECO:0007669"/>
    <property type="project" value="UniProtKB-UniRule"/>
</dbReference>
<dbReference type="HAMAP" id="MF_00808">
    <property type="entry name" value="PSII_PsbT"/>
    <property type="match status" value="1"/>
</dbReference>
<dbReference type="InterPro" id="IPR001743">
    <property type="entry name" value="PSII_PsbT"/>
</dbReference>
<dbReference type="InterPro" id="IPR037268">
    <property type="entry name" value="PSII_PsbT_sf"/>
</dbReference>
<dbReference type="PANTHER" id="PTHR36411">
    <property type="match status" value="1"/>
</dbReference>
<dbReference type="PANTHER" id="PTHR36411:SF2">
    <property type="entry name" value="PHOTOSYSTEM II REACTION CENTER PROTEIN T"/>
    <property type="match status" value="1"/>
</dbReference>
<dbReference type="Pfam" id="PF01405">
    <property type="entry name" value="PsbT"/>
    <property type="match status" value="1"/>
</dbReference>
<dbReference type="SUPFAM" id="SSF161029">
    <property type="entry name" value="Photosystem II reaction center protein T, PsbT"/>
    <property type="match status" value="1"/>
</dbReference>
<accession>P12182</accession>
<name>PSBT_MARPO</name>
<evidence type="ECO:0000255" key="1">
    <source>
        <dbReference type="HAMAP-Rule" id="MF_00808"/>
    </source>
</evidence>
<protein>
    <recommendedName>
        <fullName evidence="1">Photosystem II reaction center protein T</fullName>
        <shortName evidence="1">PSII-T</shortName>
    </recommendedName>
</protein>
<gene>
    <name evidence="1" type="primary">psbT</name>
    <name type="synonym">ycf8</name>
</gene>
<feature type="chain" id="PRO_0000217951" description="Photosystem II reaction center protein T">
    <location>
        <begin position="1"/>
        <end position="35"/>
    </location>
</feature>
<feature type="transmembrane region" description="Helical" evidence="1">
    <location>
        <begin position="3"/>
        <end position="23"/>
    </location>
</feature>
<geneLocation type="chloroplast"/>
<comment type="function">
    <text evidence="1">Found at the monomer-monomer interface of the photosystem II (PS II) dimer, plays a role in assembly and dimerization of PSII. PSII is a light-driven water plastoquinone oxidoreductase, using light energy to abstract electrons from H(2)O, generating a proton gradient subsequently used for ATP formation.</text>
</comment>
<comment type="subunit">
    <text evidence="1">PSII is composed of 1 copy each of membrane proteins PsbA, PsbB, PsbC, PsbD, PsbE, PsbF, PsbH, PsbI, PsbJ, PsbK, PsbL, PsbM, PsbT, PsbY, PsbZ, Psb30/Ycf12, at least 3 peripheral proteins of the oxygen-evolving complex and a large number of cofactors. It forms dimeric complexes.</text>
</comment>
<comment type="subcellular location">
    <subcellularLocation>
        <location evidence="1">Plastid</location>
        <location evidence="1">Chloroplast thylakoid membrane</location>
        <topology evidence="1">Single-pass membrane protein</topology>
    </subcellularLocation>
</comment>
<comment type="similarity">
    <text evidence="1">Belongs to the PsbT family.</text>
</comment>
<organism>
    <name type="scientific">Marchantia polymorpha</name>
    <name type="common">Common liverwort</name>
    <name type="synonym">Marchantia aquatica</name>
    <dbReference type="NCBI Taxonomy" id="3197"/>
    <lineage>
        <taxon>Eukaryota</taxon>
        <taxon>Viridiplantae</taxon>
        <taxon>Streptophyta</taxon>
        <taxon>Embryophyta</taxon>
        <taxon>Marchantiophyta</taxon>
        <taxon>Marchantiopsida</taxon>
        <taxon>Marchantiidae</taxon>
        <taxon>Marchantiales</taxon>
        <taxon>Marchantiaceae</taxon>
        <taxon>Marchantia</taxon>
    </lineage>
</organism>
<proteinExistence type="inferred from homology"/>
<reference key="1">
    <citation type="journal article" date="1988" name="J. Mol. Biol.">
        <title>Structure and organization of Marchantia polymorpha chloroplast genome. III. Gene organization of the large single copy region from rbcL to trnI(CAU).</title>
        <authorList>
            <person name="Fukuzawa H."/>
            <person name="Kohchi T."/>
            <person name="Sano T."/>
            <person name="Shirai H."/>
            <person name="Umesono K."/>
            <person name="Inokuchi H."/>
            <person name="Ozeki H."/>
            <person name="Ohyama K."/>
        </authorList>
    </citation>
    <scope>NUCLEOTIDE SEQUENCE [GENOMIC DNA]</scope>
</reference>
<reference key="2">
    <citation type="journal article" date="1986" name="Nature">
        <title>Chloroplast gene organization deduced from complete sequence of liverwort Marchantia polymorpha chloroplast DNA.</title>
        <authorList>
            <person name="Ohyama K."/>
            <person name="Fukuzawa H."/>
            <person name="Kohchi T."/>
            <person name="Shirai H."/>
            <person name="Sano T."/>
            <person name="Sano S."/>
            <person name="Umesono K."/>
            <person name="Shiki Y."/>
            <person name="Takeuchi M."/>
            <person name="Chang Z."/>
            <person name="Aota S."/>
            <person name="Inokuchi H."/>
            <person name="Ozeki H."/>
        </authorList>
    </citation>
    <scope>NUCLEOTIDE SEQUENCE [LARGE SCALE GENOMIC DNA]</scope>
</reference>
<sequence length="35" mass="3959">MEALVYTFLLVGTLGIIFFAIFFREPPKVPSKGKK</sequence>